<comment type="function">
    <text evidence="1">Produces ATP from ADP in the presence of a proton gradient across the membrane. The V-type alpha chain is a catalytic subunit.</text>
</comment>
<comment type="catalytic activity">
    <reaction evidence="1">
        <text>ATP + H2O + 4 H(+)(in) = ADP + phosphate + 5 H(+)(out)</text>
        <dbReference type="Rhea" id="RHEA:57720"/>
        <dbReference type="ChEBI" id="CHEBI:15377"/>
        <dbReference type="ChEBI" id="CHEBI:15378"/>
        <dbReference type="ChEBI" id="CHEBI:30616"/>
        <dbReference type="ChEBI" id="CHEBI:43474"/>
        <dbReference type="ChEBI" id="CHEBI:456216"/>
        <dbReference type="EC" id="7.1.2.2"/>
    </reaction>
</comment>
<comment type="similarity">
    <text evidence="1">Belongs to the ATPase alpha/beta chains family.</text>
</comment>
<evidence type="ECO:0000255" key="1">
    <source>
        <dbReference type="HAMAP-Rule" id="MF_00309"/>
    </source>
</evidence>
<proteinExistence type="inferred from homology"/>
<accession>Q1JNS8</accession>
<keyword id="KW-0066">ATP synthesis</keyword>
<keyword id="KW-0067">ATP-binding</keyword>
<keyword id="KW-0375">Hydrogen ion transport</keyword>
<keyword id="KW-0406">Ion transport</keyword>
<keyword id="KW-0547">Nucleotide-binding</keyword>
<keyword id="KW-1278">Translocase</keyword>
<keyword id="KW-0813">Transport</keyword>
<sequence>MNQGKIITVSGPLVVASGMQEANIQDICRVGHLGLVGEIIEMRRDQASIQVYEETSGIGPGEPVVTTGCPLSVELGPGLISEMFDGIQRPLDRFQKATDSDFLIRGVAIPSLDRKAKWAFIPKLSVGQEVVAGDILGTVQETAVIEHRIMVPYKVSGTLVAIHAGNFTVTDTVYEIKQEDGSIYQGSLMQTWPVRQSRPVAQKLIPVEPLVTGQRVIDTFFPVTKGGAAAVPGPFGAGKTVVQHQIAKFANVDIVIYVGCGERGNEMTDVLNEFPELIDPNTGQSIMERTVLIANTSNMPVAAREASIYTGITIAEYFRDMGYSVAIMADSTSRWAEALREMSGRLQEMPGDEGYPAYLGSRIAEYYERAGRVRTLGSQEREGTITAIGAVSPPGGDISEPVTQNTLRIVKVFWGLDAPLAQRRHFPAINWLTSYSLYQDDVGSYIDRKQESNWSNKVTRAMAILQREASLEEIVRLVGLDSLSEQDRLTMAVARQIREDYLQQNAFDSVDTFTSFPKQEAMLTNILTFNEEASKALSLGAYFKEIMEGTAQVRDRIARSKFIPEENLEQIKGLTQKVTKEIHHVLAKGGI</sequence>
<organism>
    <name type="scientific">Streptococcus pyogenes serotype M12 (strain MGAS9429)</name>
    <dbReference type="NCBI Taxonomy" id="370551"/>
    <lineage>
        <taxon>Bacteria</taxon>
        <taxon>Bacillati</taxon>
        <taxon>Bacillota</taxon>
        <taxon>Bacilli</taxon>
        <taxon>Lactobacillales</taxon>
        <taxon>Streptococcaceae</taxon>
        <taxon>Streptococcus</taxon>
    </lineage>
</organism>
<gene>
    <name evidence="1" type="primary">atpA</name>
    <name type="ordered locus">MGAS9429_Spy0133</name>
</gene>
<protein>
    <recommendedName>
        <fullName evidence="1">V-type ATP synthase alpha chain</fullName>
        <ecNumber evidence="1">7.1.2.2</ecNumber>
    </recommendedName>
    <alternativeName>
        <fullName evidence="1">V-ATPase subunit A</fullName>
    </alternativeName>
</protein>
<feature type="chain" id="PRO_1000059354" description="V-type ATP synthase alpha chain">
    <location>
        <begin position="1"/>
        <end position="591"/>
    </location>
</feature>
<feature type="binding site" evidence="1">
    <location>
        <begin position="233"/>
        <end position="240"/>
    </location>
    <ligand>
        <name>ATP</name>
        <dbReference type="ChEBI" id="CHEBI:30616"/>
    </ligand>
</feature>
<dbReference type="EC" id="7.1.2.2" evidence="1"/>
<dbReference type="EMBL" id="CP000259">
    <property type="protein sequence ID" value="ABF31321.1"/>
    <property type="molecule type" value="Genomic_DNA"/>
</dbReference>
<dbReference type="RefSeq" id="WP_002987868.1">
    <property type="nucleotide sequence ID" value="NC_008021.1"/>
</dbReference>
<dbReference type="SMR" id="Q1JNS8"/>
<dbReference type="KEGG" id="spk:MGAS9429_Spy0133"/>
<dbReference type="HOGENOM" id="CLU_008162_3_1_9"/>
<dbReference type="Proteomes" id="UP000002433">
    <property type="component" value="Chromosome"/>
</dbReference>
<dbReference type="GO" id="GO:0045259">
    <property type="term" value="C:proton-transporting ATP synthase complex"/>
    <property type="evidence" value="ECO:0007669"/>
    <property type="project" value="UniProtKB-ARBA"/>
</dbReference>
<dbReference type="GO" id="GO:0005524">
    <property type="term" value="F:ATP binding"/>
    <property type="evidence" value="ECO:0007669"/>
    <property type="project" value="UniProtKB-UniRule"/>
</dbReference>
<dbReference type="GO" id="GO:0046933">
    <property type="term" value="F:proton-transporting ATP synthase activity, rotational mechanism"/>
    <property type="evidence" value="ECO:0007669"/>
    <property type="project" value="UniProtKB-UniRule"/>
</dbReference>
<dbReference type="GO" id="GO:0046961">
    <property type="term" value="F:proton-transporting ATPase activity, rotational mechanism"/>
    <property type="evidence" value="ECO:0007669"/>
    <property type="project" value="InterPro"/>
</dbReference>
<dbReference type="GO" id="GO:0042777">
    <property type="term" value="P:proton motive force-driven plasma membrane ATP synthesis"/>
    <property type="evidence" value="ECO:0007669"/>
    <property type="project" value="UniProtKB-UniRule"/>
</dbReference>
<dbReference type="CDD" id="cd18111">
    <property type="entry name" value="ATP-synt_V_A-type_alpha_C"/>
    <property type="match status" value="1"/>
</dbReference>
<dbReference type="CDD" id="cd18119">
    <property type="entry name" value="ATP-synt_V_A-type_alpha_N"/>
    <property type="match status" value="1"/>
</dbReference>
<dbReference type="CDD" id="cd01134">
    <property type="entry name" value="V_A-ATPase_A"/>
    <property type="match status" value="1"/>
</dbReference>
<dbReference type="FunFam" id="3.40.50.300:FF:000675">
    <property type="entry name" value="V-type ATP synthase alpha chain"/>
    <property type="match status" value="1"/>
</dbReference>
<dbReference type="FunFam" id="2.40.30.20:FF:000002">
    <property type="entry name" value="V-type proton ATPase catalytic subunit A"/>
    <property type="match status" value="1"/>
</dbReference>
<dbReference type="FunFam" id="2.40.50.100:FF:000008">
    <property type="entry name" value="V-type proton ATPase catalytic subunit A"/>
    <property type="match status" value="1"/>
</dbReference>
<dbReference type="Gene3D" id="2.40.30.20">
    <property type="match status" value="1"/>
</dbReference>
<dbReference type="Gene3D" id="2.40.50.100">
    <property type="match status" value="1"/>
</dbReference>
<dbReference type="Gene3D" id="1.10.1140.10">
    <property type="entry name" value="Bovine Mitochondrial F1-atpase, Atp Synthase Beta Chain, Chain D, domain 3"/>
    <property type="match status" value="1"/>
</dbReference>
<dbReference type="Gene3D" id="3.40.50.300">
    <property type="entry name" value="P-loop containing nucleotide triphosphate hydrolases"/>
    <property type="match status" value="1"/>
</dbReference>
<dbReference type="HAMAP" id="MF_00309">
    <property type="entry name" value="ATP_synth_A_arch"/>
    <property type="match status" value="1"/>
</dbReference>
<dbReference type="InterPro" id="IPR055190">
    <property type="entry name" value="ATP-synt_VA_C"/>
</dbReference>
<dbReference type="InterPro" id="IPR031686">
    <property type="entry name" value="ATP-synth_a_Xtn"/>
</dbReference>
<dbReference type="InterPro" id="IPR023366">
    <property type="entry name" value="ATP_synth_asu-like_sf"/>
</dbReference>
<dbReference type="InterPro" id="IPR020003">
    <property type="entry name" value="ATPase_a/bsu_AS"/>
</dbReference>
<dbReference type="InterPro" id="IPR004100">
    <property type="entry name" value="ATPase_F1/V1/A1_a/bsu_N"/>
</dbReference>
<dbReference type="InterPro" id="IPR036121">
    <property type="entry name" value="ATPase_F1/V1/A1_a/bsu_N_sf"/>
</dbReference>
<dbReference type="InterPro" id="IPR000194">
    <property type="entry name" value="ATPase_F1/V1/A1_a/bsu_nucl-bd"/>
</dbReference>
<dbReference type="InterPro" id="IPR024034">
    <property type="entry name" value="ATPase_F1/V1_b/a_C"/>
</dbReference>
<dbReference type="InterPro" id="IPR027417">
    <property type="entry name" value="P-loop_NTPase"/>
</dbReference>
<dbReference type="InterPro" id="IPR022878">
    <property type="entry name" value="V-ATPase_asu"/>
</dbReference>
<dbReference type="NCBIfam" id="NF003220">
    <property type="entry name" value="PRK04192.1"/>
    <property type="match status" value="1"/>
</dbReference>
<dbReference type="PANTHER" id="PTHR43607:SF1">
    <property type="entry name" value="H(+)-TRANSPORTING TWO-SECTOR ATPASE"/>
    <property type="match status" value="1"/>
</dbReference>
<dbReference type="PANTHER" id="PTHR43607">
    <property type="entry name" value="V-TYPE PROTON ATPASE CATALYTIC SUBUNIT A"/>
    <property type="match status" value="1"/>
</dbReference>
<dbReference type="Pfam" id="PF00006">
    <property type="entry name" value="ATP-synt_ab"/>
    <property type="match status" value="1"/>
</dbReference>
<dbReference type="Pfam" id="PF02874">
    <property type="entry name" value="ATP-synt_ab_N"/>
    <property type="match status" value="1"/>
</dbReference>
<dbReference type="Pfam" id="PF16886">
    <property type="entry name" value="ATP-synt_ab_Xtn"/>
    <property type="match status" value="1"/>
</dbReference>
<dbReference type="Pfam" id="PF22919">
    <property type="entry name" value="ATP-synt_VA_C"/>
    <property type="match status" value="1"/>
</dbReference>
<dbReference type="SUPFAM" id="SSF47917">
    <property type="entry name" value="C-terminal domain of alpha and beta subunits of F1 ATP synthase"/>
    <property type="match status" value="1"/>
</dbReference>
<dbReference type="SUPFAM" id="SSF50615">
    <property type="entry name" value="N-terminal domain of alpha and beta subunits of F1 ATP synthase"/>
    <property type="match status" value="1"/>
</dbReference>
<dbReference type="SUPFAM" id="SSF52540">
    <property type="entry name" value="P-loop containing nucleoside triphosphate hydrolases"/>
    <property type="match status" value="1"/>
</dbReference>
<dbReference type="PROSITE" id="PS00152">
    <property type="entry name" value="ATPASE_ALPHA_BETA"/>
    <property type="match status" value="1"/>
</dbReference>
<name>VATA_STRPC</name>
<reference key="1">
    <citation type="journal article" date="2006" name="Proc. Natl. Acad. Sci. U.S.A.">
        <title>Molecular genetic anatomy of inter- and intraserotype variation in the human bacterial pathogen group A Streptococcus.</title>
        <authorList>
            <person name="Beres S.B."/>
            <person name="Richter E.W."/>
            <person name="Nagiec M.J."/>
            <person name="Sumby P."/>
            <person name="Porcella S.F."/>
            <person name="DeLeo F.R."/>
            <person name="Musser J.M."/>
        </authorList>
    </citation>
    <scope>NUCLEOTIDE SEQUENCE [LARGE SCALE GENOMIC DNA]</scope>
    <source>
        <strain>MGAS9429</strain>
    </source>
</reference>